<organism>
    <name type="scientific">Rhodopseudomonas palustris (strain TIE-1)</name>
    <dbReference type="NCBI Taxonomy" id="395960"/>
    <lineage>
        <taxon>Bacteria</taxon>
        <taxon>Pseudomonadati</taxon>
        <taxon>Pseudomonadota</taxon>
        <taxon>Alphaproteobacteria</taxon>
        <taxon>Hyphomicrobiales</taxon>
        <taxon>Nitrobacteraceae</taxon>
        <taxon>Rhodopseudomonas</taxon>
    </lineage>
</organism>
<gene>
    <name type="ordered locus">Rpal_5021</name>
</gene>
<reference key="1">
    <citation type="submission" date="2008-05" db="EMBL/GenBank/DDBJ databases">
        <title>Complete sequence of Rhodopseudomonas palustris TIE-1.</title>
        <authorList>
            <consortium name="US DOE Joint Genome Institute"/>
            <person name="Lucas S."/>
            <person name="Copeland A."/>
            <person name="Lapidus A."/>
            <person name="Glavina del Rio T."/>
            <person name="Dalin E."/>
            <person name="Tice H."/>
            <person name="Pitluck S."/>
            <person name="Chain P."/>
            <person name="Malfatti S."/>
            <person name="Shin M."/>
            <person name="Vergez L."/>
            <person name="Lang D."/>
            <person name="Schmutz J."/>
            <person name="Larimer F."/>
            <person name="Land M."/>
            <person name="Hauser L."/>
            <person name="Kyrpides N."/>
            <person name="Mikhailova N."/>
            <person name="Emerson D."/>
            <person name="Newman D.K."/>
            <person name="Roden E."/>
            <person name="Richardson P."/>
        </authorList>
    </citation>
    <scope>NUCLEOTIDE SEQUENCE [LARGE SCALE GENOMIC DNA]</scope>
    <source>
        <strain>TIE-1</strain>
    </source>
</reference>
<accession>B3QA32</accession>
<comment type="similarity">
    <text evidence="1">Belongs to the UPF0262 family.</text>
</comment>
<sequence length="163" mass="18439">MSNPEPDDSNNRIVAVTLDEESIGRSGPDIEHERAIAIYDLVEKNLFAPEGAGEGPFTLHIGITGNRLMFDIRREDGAPVITHLLSLTPFRRIVKDYFMICDSYYQAIRTATPDKIEAIDMGRRGIHDEGSRTLQERLAGKVRIDFETARRLFTLISVLHWKG</sequence>
<evidence type="ECO:0000255" key="1">
    <source>
        <dbReference type="HAMAP-Rule" id="MF_00678"/>
    </source>
</evidence>
<protein>
    <recommendedName>
        <fullName evidence="1">UPF0262 protein Rpal_5021</fullName>
    </recommendedName>
</protein>
<feature type="chain" id="PRO_1000131652" description="UPF0262 protein Rpal_5021">
    <location>
        <begin position="1"/>
        <end position="163"/>
    </location>
</feature>
<name>Y5021_RHOPT</name>
<dbReference type="EMBL" id="CP001096">
    <property type="protein sequence ID" value="ACF03510.1"/>
    <property type="molecule type" value="Genomic_DNA"/>
</dbReference>
<dbReference type="RefSeq" id="WP_011160062.1">
    <property type="nucleotide sequence ID" value="NC_011004.1"/>
</dbReference>
<dbReference type="KEGG" id="rpt:Rpal_5021"/>
<dbReference type="HOGENOM" id="CLU_112904_0_0_5"/>
<dbReference type="OrthoDB" id="9798434at2"/>
<dbReference type="Proteomes" id="UP000001725">
    <property type="component" value="Chromosome"/>
</dbReference>
<dbReference type="HAMAP" id="MF_00678">
    <property type="entry name" value="UPF0262"/>
    <property type="match status" value="1"/>
</dbReference>
<dbReference type="InterPro" id="IPR008321">
    <property type="entry name" value="UCP032146"/>
</dbReference>
<dbReference type="NCBIfam" id="NF002769">
    <property type="entry name" value="PRK02853.1"/>
    <property type="match status" value="1"/>
</dbReference>
<dbReference type="Pfam" id="PF06793">
    <property type="entry name" value="UPF0262"/>
    <property type="match status" value="1"/>
</dbReference>
<dbReference type="PIRSF" id="PIRSF032146">
    <property type="entry name" value="UCP032146"/>
    <property type="match status" value="1"/>
</dbReference>
<proteinExistence type="inferred from homology"/>